<organism>
    <name type="scientific">Frankia alni (strain DSM 45986 / CECT 9034 / ACN14a)</name>
    <dbReference type="NCBI Taxonomy" id="326424"/>
    <lineage>
        <taxon>Bacteria</taxon>
        <taxon>Bacillati</taxon>
        <taxon>Actinomycetota</taxon>
        <taxon>Actinomycetes</taxon>
        <taxon>Frankiales</taxon>
        <taxon>Frankiaceae</taxon>
        <taxon>Frankia</taxon>
    </lineage>
</organism>
<name>LEUC_FRAAA</name>
<sequence length="465" mass="48595">MGRTLAEKVWDAHVVRRADGEPDLLYIDLHLVHEVTSPQAFEALRLAGRPLRRPDLTLATEDHNVPTTNTLAPIADPISAAQVEALRKNCAEFGVRLYPMNDPGQGIVHVVGPQLGLSQPGMTIVCGDSHTSTHGAFGALAFGIGTSQVEHVLATQTLPQSRPKTMAVTVDGDLPAGVTAKDLILAIIARIGTGGGAGHVIEYRGAAVRGLSMEGRMTVCNMSIEAGARAGMIAPDDTTFEYLAGRAHAATGPDWDQAVAYWRTLASDDDAVFDREVVIDAASLTPYVTWGTNPGQAAPLGSLIPAPADYADPAARASVERALTYMGLTAGTPLSEVTVDTVFIGSCTNGRLSDLRAAADVLRGRRVADGVRALVVPGSMQVKAEAEAEGLDEVFRAAGAEWRSAGCSMCLGMNPDTLRPGERSASTSNRNFEGRQGPGGRTHLVSPAVAAATAVTGQLTAPAQL</sequence>
<proteinExistence type="inferred from homology"/>
<protein>
    <recommendedName>
        <fullName evidence="1">3-isopropylmalate dehydratase large subunit</fullName>
        <ecNumber evidence="1">4.2.1.33</ecNumber>
    </recommendedName>
    <alternativeName>
        <fullName evidence="1">Alpha-IPM isomerase</fullName>
        <shortName evidence="1">IPMI</shortName>
    </alternativeName>
    <alternativeName>
        <fullName evidence="1">Isopropylmalate isomerase</fullName>
    </alternativeName>
</protein>
<keyword id="KW-0004">4Fe-4S</keyword>
<keyword id="KW-0028">Amino-acid biosynthesis</keyword>
<keyword id="KW-0100">Branched-chain amino acid biosynthesis</keyword>
<keyword id="KW-0408">Iron</keyword>
<keyword id="KW-0411">Iron-sulfur</keyword>
<keyword id="KW-0432">Leucine biosynthesis</keyword>
<keyword id="KW-0456">Lyase</keyword>
<keyword id="KW-0479">Metal-binding</keyword>
<keyword id="KW-1185">Reference proteome</keyword>
<feature type="chain" id="PRO_1000063555" description="3-isopropylmalate dehydratase large subunit">
    <location>
        <begin position="1"/>
        <end position="465"/>
    </location>
</feature>
<feature type="region of interest" description="Disordered" evidence="2">
    <location>
        <begin position="416"/>
        <end position="443"/>
    </location>
</feature>
<feature type="binding site" evidence="1">
    <location>
        <position position="347"/>
    </location>
    <ligand>
        <name>[4Fe-4S] cluster</name>
        <dbReference type="ChEBI" id="CHEBI:49883"/>
    </ligand>
</feature>
<feature type="binding site" evidence="1">
    <location>
        <position position="407"/>
    </location>
    <ligand>
        <name>[4Fe-4S] cluster</name>
        <dbReference type="ChEBI" id="CHEBI:49883"/>
    </ligand>
</feature>
<feature type="binding site" evidence="1">
    <location>
        <position position="410"/>
    </location>
    <ligand>
        <name>[4Fe-4S] cluster</name>
        <dbReference type="ChEBI" id="CHEBI:49883"/>
    </ligand>
</feature>
<evidence type="ECO:0000255" key="1">
    <source>
        <dbReference type="HAMAP-Rule" id="MF_01026"/>
    </source>
</evidence>
<evidence type="ECO:0000256" key="2">
    <source>
        <dbReference type="SAM" id="MobiDB-lite"/>
    </source>
</evidence>
<dbReference type="EC" id="4.2.1.33" evidence="1"/>
<dbReference type="EMBL" id="CT573213">
    <property type="protein sequence ID" value="CAJ64461.1"/>
    <property type="molecule type" value="Genomic_DNA"/>
</dbReference>
<dbReference type="RefSeq" id="WP_011606897.1">
    <property type="nucleotide sequence ID" value="NC_008278.1"/>
</dbReference>
<dbReference type="SMR" id="Q0RDK7"/>
<dbReference type="STRING" id="326424.FRAAL5829"/>
<dbReference type="KEGG" id="fal:FRAAL5829"/>
<dbReference type="eggNOG" id="COG0065">
    <property type="taxonomic scope" value="Bacteria"/>
</dbReference>
<dbReference type="HOGENOM" id="CLU_006714_3_4_11"/>
<dbReference type="OrthoDB" id="9802769at2"/>
<dbReference type="UniPathway" id="UPA00048">
    <property type="reaction ID" value="UER00071"/>
</dbReference>
<dbReference type="Proteomes" id="UP000000657">
    <property type="component" value="Chromosome"/>
</dbReference>
<dbReference type="GO" id="GO:0003861">
    <property type="term" value="F:3-isopropylmalate dehydratase activity"/>
    <property type="evidence" value="ECO:0007669"/>
    <property type="project" value="UniProtKB-UniRule"/>
</dbReference>
<dbReference type="GO" id="GO:0051539">
    <property type="term" value="F:4 iron, 4 sulfur cluster binding"/>
    <property type="evidence" value="ECO:0007669"/>
    <property type="project" value="UniProtKB-KW"/>
</dbReference>
<dbReference type="GO" id="GO:0046872">
    <property type="term" value="F:metal ion binding"/>
    <property type="evidence" value="ECO:0007669"/>
    <property type="project" value="UniProtKB-KW"/>
</dbReference>
<dbReference type="GO" id="GO:0009098">
    <property type="term" value="P:L-leucine biosynthetic process"/>
    <property type="evidence" value="ECO:0007669"/>
    <property type="project" value="UniProtKB-UniRule"/>
</dbReference>
<dbReference type="CDD" id="cd01583">
    <property type="entry name" value="IPMI"/>
    <property type="match status" value="1"/>
</dbReference>
<dbReference type="FunFam" id="3.30.499.10:FF:000007">
    <property type="entry name" value="3-isopropylmalate dehydratase large subunit"/>
    <property type="match status" value="1"/>
</dbReference>
<dbReference type="Gene3D" id="3.30.499.10">
    <property type="entry name" value="Aconitase, domain 3"/>
    <property type="match status" value="2"/>
</dbReference>
<dbReference type="HAMAP" id="MF_01026">
    <property type="entry name" value="LeuC_type1"/>
    <property type="match status" value="1"/>
</dbReference>
<dbReference type="InterPro" id="IPR004430">
    <property type="entry name" value="3-IsopropMal_deHydase_lsu"/>
</dbReference>
<dbReference type="InterPro" id="IPR015931">
    <property type="entry name" value="Acnase/IPM_dHydase_lsu_aba_1/3"/>
</dbReference>
<dbReference type="InterPro" id="IPR001030">
    <property type="entry name" value="Acoase/IPM_deHydtase_lsu_aba"/>
</dbReference>
<dbReference type="InterPro" id="IPR018136">
    <property type="entry name" value="Aconitase_4Fe-4S_BS"/>
</dbReference>
<dbReference type="InterPro" id="IPR036008">
    <property type="entry name" value="Aconitase_4Fe-4S_dom"/>
</dbReference>
<dbReference type="InterPro" id="IPR050067">
    <property type="entry name" value="IPM_dehydratase_rel_enz"/>
</dbReference>
<dbReference type="InterPro" id="IPR033941">
    <property type="entry name" value="IPMI_cat"/>
</dbReference>
<dbReference type="NCBIfam" id="TIGR00170">
    <property type="entry name" value="leuC"/>
    <property type="match status" value="1"/>
</dbReference>
<dbReference type="NCBIfam" id="NF004016">
    <property type="entry name" value="PRK05478.1"/>
    <property type="match status" value="1"/>
</dbReference>
<dbReference type="NCBIfam" id="NF009116">
    <property type="entry name" value="PRK12466.1"/>
    <property type="match status" value="1"/>
</dbReference>
<dbReference type="PANTHER" id="PTHR43822:SF9">
    <property type="entry name" value="3-ISOPROPYLMALATE DEHYDRATASE"/>
    <property type="match status" value="1"/>
</dbReference>
<dbReference type="PANTHER" id="PTHR43822">
    <property type="entry name" value="HOMOACONITASE, MITOCHONDRIAL-RELATED"/>
    <property type="match status" value="1"/>
</dbReference>
<dbReference type="Pfam" id="PF00330">
    <property type="entry name" value="Aconitase"/>
    <property type="match status" value="1"/>
</dbReference>
<dbReference type="PRINTS" id="PR00415">
    <property type="entry name" value="ACONITASE"/>
</dbReference>
<dbReference type="SUPFAM" id="SSF53732">
    <property type="entry name" value="Aconitase iron-sulfur domain"/>
    <property type="match status" value="1"/>
</dbReference>
<dbReference type="PROSITE" id="PS00450">
    <property type="entry name" value="ACONITASE_1"/>
    <property type="match status" value="1"/>
</dbReference>
<dbReference type="PROSITE" id="PS01244">
    <property type="entry name" value="ACONITASE_2"/>
    <property type="match status" value="1"/>
</dbReference>
<gene>
    <name evidence="1" type="primary">leuC</name>
    <name type="ordered locus">FRAAL5829</name>
</gene>
<reference key="1">
    <citation type="journal article" date="2007" name="Genome Res.">
        <title>Genome characteristics of facultatively symbiotic Frankia sp. strains reflect host range and host plant biogeography.</title>
        <authorList>
            <person name="Normand P."/>
            <person name="Lapierre P."/>
            <person name="Tisa L.S."/>
            <person name="Gogarten J.P."/>
            <person name="Alloisio N."/>
            <person name="Bagnarol E."/>
            <person name="Bassi C.A."/>
            <person name="Berry A.M."/>
            <person name="Bickhart D.M."/>
            <person name="Choisne N."/>
            <person name="Couloux A."/>
            <person name="Cournoyer B."/>
            <person name="Cruveiller S."/>
            <person name="Daubin V."/>
            <person name="Demange N."/>
            <person name="Francino M.P."/>
            <person name="Goltsman E."/>
            <person name="Huang Y."/>
            <person name="Kopp O.R."/>
            <person name="Labarre L."/>
            <person name="Lapidus A."/>
            <person name="Lavire C."/>
            <person name="Marechal J."/>
            <person name="Martinez M."/>
            <person name="Mastronunzio J.E."/>
            <person name="Mullin B.C."/>
            <person name="Niemann J."/>
            <person name="Pujic P."/>
            <person name="Rawnsley T."/>
            <person name="Rouy Z."/>
            <person name="Schenowitz C."/>
            <person name="Sellstedt A."/>
            <person name="Tavares F."/>
            <person name="Tomkins J.P."/>
            <person name="Vallenet D."/>
            <person name="Valverde C."/>
            <person name="Wall L.G."/>
            <person name="Wang Y."/>
            <person name="Medigue C."/>
            <person name="Benson D.R."/>
        </authorList>
    </citation>
    <scope>NUCLEOTIDE SEQUENCE [LARGE SCALE GENOMIC DNA]</scope>
    <source>
        <strain>DSM 45986 / CECT 9034 / ACN14a</strain>
    </source>
</reference>
<comment type="function">
    <text evidence="1">Catalyzes the isomerization between 2-isopropylmalate and 3-isopropylmalate, via the formation of 2-isopropylmaleate.</text>
</comment>
<comment type="catalytic activity">
    <reaction evidence="1">
        <text>(2R,3S)-3-isopropylmalate = (2S)-2-isopropylmalate</text>
        <dbReference type="Rhea" id="RHEA:32287"/>
        <dbReference type="ChEBI" id="CHEBI:1178"/>
        <dbReference type="ChEBI" id="CHEBI:35121"/>
        <dbReference type="EC" id="4.2.1.33"/>
    </reaction>
</comment>
<comment type="cofactor">
    <cofactor evidence="1">
        <name>[4Fe-4S] cluster</name>
        <dbReference type="ChEBI" id="CHEBI:49883"/>
    </cofactor>
    <text evidence="1">Binds 1 [4Fe-4S] cluster per subunit.</text>
</comment>
<comment type="pathway">
    <text evidence="1">Amino-acid biosynthesis; L-leucine biosynthesis; L-leucine from 3-methyl-2-oxobutanoate: step 2/4.</text>
</comment>
<comment type="subunit">
    <text evidence="1">Heterodimer of LeuC and LeuD.</text>
</comment>
<comment type="similarity">
    <text evidence="1">Belongs to the aconitase/IPM isomerase family. LeuC type 1 subfamily.</text>
</comment>
<accession>Q0RDK7</accession>